<proteinExistence type="evidence at transcript level"/>
<dbReference type="EMBL" id="BC112709">
    <property type="protein sequence ID" value="AAI12710.1"/>
    <property type="molecule type" value="mRNA"/>
</dbReference>
<dbReference type="RefSeq" id="NP_001039516.1">
    <property type="nucleotide sequence ID" value="NM_001046051.2"/>
</dbReference>
<dbReference type="SMR" id="Q2KIA6"/>
<dbReference type="FunCoup" id="Q2KIA6">
    <property type="interactions" value="3245"/>
</dbReference>
<dbReference type="STRING" id="9913.ENSBTAP00000066951"/>
<dbReference type="PaxDb" id="9913-ENSBTAP00000018533"/>
<dbReference type="GeneID" id="510322"/>
<dbReference type="KEGG" id="bta:510322"/>
<dbReference type="CTD" id="9129"/>
<dbReference type="eggNOG" id="KOG2769">
    <property type="taxonomic scope" value="Eukaryota"/>
</dbReference>
<dbReference type="InParanoid" id="Q2KIA6"/>
<dbReference type="OrthoDB" id="10264544at2759"/>
<dbReference type="Proteomes" id="UP000009136">
    <property type="component" value="Unplaced"/>
</dbReference>
<dbReference type="GO" id="GO:0016607">
    <property type="term" value="C:nuclear speck"/>
    <property type="evidence" value="ECO:0007669"/>
    <property type="project" value="UniProtKB-SubCell"/>
</dbReference>
<dbReference type="GO" id="GO:0005634">
    <property type="term" value="C:nucleus"/>
    <property type="evidence" value="ECO:0000250"/>
    <property type="project" value="UniProtKB"/>
</dbReference>
<dbReference type="GO" id="GO:0005681">
    <property type="term" value="C:spliceosomal complex"/>
    <property type="evidence" value="ECO:0007669"/>
    <property type="project" value="UniProtKB-KW"/>
</dbReference>
<dbReference type="GO" id="GO:0046540">
    <property type="term" value="C:U4/U6 x U5 tri-snRNP complex"/>
    <property type="evidence" value="ECO:0000250"/>
    <property type="project" value="UniProtKB"/>
</dbReference>
<dbReference type="GO" id="GO:0000398">
    <property type="term" value="P:mRNA splicing, via spliceosome"/>
    <property type="evidence" value="ECO:0000250"/>
    <property type="project" value="UniProtKB"/>
</dbReference>
<dbReference type="GO" id="GO:0000244">
    <property type="term" value="P:spliceosomal tri-snRNP complex assembly"/>
    <property type="evidence" value="ECO:0000250"/>
    <property type="project" value="UniProtKB"/>
</dbReference>
<dbReference type="CDD" id="cd24162">
    <property type="entry name" value="Prp3_C"/>
    <property type="match status" value="1"/>
</dbReference>
<dbReference type="FunFam" id="1.20.1390.10:FF:000003">
    <property type="entry name" value="U4/U6 small nuclear ribonucleoprotein Prp3"/>
    <property type="match status" value="1"/>
</dbReference>
<dbReference type="Gene3D" id="1.20.1390.10">
    <property type="entry name" value="PWI domain"/>
    <property type="match status" value="1"/>
</dbReference>
<dbReference type="InterPro" id="IPR013881">
    <property type="entry name" value="Pre-mRNA_splic_Prp3_dom"/>
</dbReference>
<dbReference type="InterPro" id="IPR027104">
    <property type="entry name" value="Prp3"/>
</dbReference>
<dbReference type="InterPro" id="IPR010541">
    <property type="entry name" value="Prp3_C"/>
</dbReference>
<dbReference type="InterPro" id="IPR002483">
    <property type="entry name" value="PWI_dom"/>
</dbReference>
<dbReference type="InterPro" id="IPR036483">
    <property type="entry name" value="PWI_dom_sf"/>
</dbReference>
<dbReference type="PANTHER" id="PTHR14212">
    <property type="entry name" value="U4/U6-ASSOCIATED RNA SPLICING FACTOR-RELATED"/>
    <property type="match status" value="1"/>
</dbReference>
<dbReference type="PANTHER" id="PTHR14212:SF0">
    <property type="entry name" value="U4_U6 SMALL NUCLEAR RIBONUCLEOPROTEIN PRP3"/>
    <property type="match status" value="1"/>
</dbReference>
<dbReference type="Pfam" id="PF08572">
    <property type="entry name" value="PRP3"/>
    <property type="match status" value="1"/>
</dbReference>
<dbReference type="Pfam" id="PF06544">
    <property type="entry name" value="Prp3_C"/>
    <property type="match status" value="1"/>
</dbReference>
<dbReference type="Pfam" id="PF01480">
    <property type="entry name" value="PWI"/>
    <property type="match status" value="1"/>
</dbReference>
<dbReference type="SMART" id="SM00311">
    <property type="entry name" value="PWI"/>
    <property type="match status" value="1"/>
</dbReference>
<dbReference type="SUPFAM" id="SSF101233">
    <property type="entry name" value="PWI domain"/>
    <property type="match status" value="1"/>
</dbReference>
<dbReference type="PROSITE" id="PS51025">
    <property type="entry name" value="PWI"/>
    <property type="match status" value="1"/>
</dbReference>
<comment type="function">
    <text evidence="1">Plays a role in pre-mRNA splicing as component of the U4/U6-U5 tri-snRNP complex that is involved in spliceosome assembly, and as component of the precatalytic spliceosome (spliceosome B complex).</text>
</comment>
<comment type="subunit">
    <text evidence="1">Component of the precatalytic spliceosome (spliceosome B complex) (By similarity). Component of the U4/U6-U5 tri-snRNP complex, a building block of the precatalytic spliceosome (spliceosome B complex) (By similarity). The U4/U6-U5 tri-snRNP complex is composed of the U4, U6 and U5 snRNAs and at least PRPF3, PRPF4, PRPF6, PRPF8, PRPF31, SNRNP200, TXNL4A, SNRNP40, SNRPB, SNRPD1, SNRPD2, SNRPD3, SNRPE, SNRPF, SNRPG, DDX23, CD2BP2, PPIH, SNU13, EFTUD2, SART1 and USP39, plus LSM2, LSM3, LSM4, LSM5, LSM6, LSM7 and LSM8 (By similarity). Interacts directly with PRPF4 (By similarity). Part of a heteromeric complex containing PPIH, PRPF3 and PRPF4 that is stable in the absence of RNA (By similarity). Interacts with SART3; the interaction is direct and recruits the deubiquitinase USP4 to PRPF3 (By similarity). Interacts with PRPF19 (By similarity). Interacts ('Lys-63'-linked polyubiquitinated) with PRPF8 (via the MPN (JAB/Mov34) domain); may stabilize the U4/U6-U5 tri-snRNP complex (By similarity). Interacts with ERCC6 (By similarity).</text>
</comment>
<comment type="subcellular location">
    <subcellularLocation>
        <location evidence="1">Nucleus</location>
    </subcellularLocation>
    <subcellularLocation>
        <location evidence="2">Nucleus speckle</location>
    </subcellularLocation>
</comment>
<comment type="PTM">
    <text evidence="1">Ubiquitinated. Undergoes 'Lys-63'-linked polyubiquitination by PRPF19 and deubiquitination by USP4. 'Lys-63'-linked ubiquitination increases the affinity for PRPF8 and may regulate the assembly of the U4/U6-U5 tri-snRNP complex.</text>
</comment>
<evidence type="ECO:0000250" key="1">
    <source>
        <dbReference type="UniProtKB" id="O43395"/>
    </source>
</evidence>
<evidence type="ECO:0000255" key="2">
    <source>
        <dbReference type="PROSITE-ProRule" id="PRU00627"/>
    </source>
</evidence>
<evidence type="ECO:0000256" key="3">
    <source>
        <dbReference type="SAM" id="MobiDB-lite"/>
    </source>
</evidence>
<reference key="1">
    <citation type="submission" date="2006-01" db="EMBL/GenBank/DDBJ databases">
        <authorList>
            <consortium name="NIH - Mammalian Gene Collection (MGC) project"/>
        </authorList>
    </citation>
    <scope>NUCLEOTIDE SEQUENCE [LARGE SCALE MRNA]</scope>
    <source>
        <strain>Hereford</strain>
        <tissue>Hypothalamus</tissue>
    </source>
</reference>
<sequence length="683" mass="77447">MALSKRELDELKPWIEKTVERVLGFSEPTVVTAALNCVGKGMDKKKAADHLKPFLDDSTLRFVDKLFEAVEEGRSSRHSKSSSDRSRKRDLKEVFGDDSEISKESSGVKKRRIPRFEEVEEEPEVIPGPPSESPGMLTKLQIKQMMEAATRQIEERKKQLSFISPPTPQPKTPSSSQPERLPIGNTIQPSQAATFMNDAIEKARKAAELQASIQAQLALKPGLIGNANMVGLANLHAMGIAPPKVELKDQTKPTPLILDEQGRTVDATGKEIELTHRMPTLKANIRAVKREQFKQQLKEKPSEDMESNTFFDPRVSIAPSQRQRRTFKFHDKGKFEKIAQRLRTKAQLEKLQAEISQAARKTGIHTSTRLALIAPKKELKEGDIPEIEWWDSYIIPNGFDLTEENPKREDYFGITNLVEHPAQLNPPVDNDTPVTLGVYLTKKEQKKLRRQTRREAQKELQEKVRLGLMPPPEPKVRISNLMRVLGTEAVQDPTKVEAHVRAQMAKRQKAHEEANAARKLTAEQRKVKKIKKLKEDISQGVHISVYRVRNLSNPAKKFKIEANAGQLYLTGVVVLHKDVNVVVVEGGPKAQKKFKRLMLHRIKWDEQTSNTKGDDDEESDEEAVKKTNKCVLVWEGTAKDRSFGEMKFKQCPTENMAREHFKKHGAEHYWDLALSESVLESTD</sequence>
<name>PRPF3_BOVIN</name>
<keyword id="KW-1017">Isopeptide bond</keyword>
<keyword id="KW-0507">mRNA processing</keyword>
<keyword id="KW-0508">mRNA splicing</keyword>
<keyword id="KW-0539">Nucleus</keyword>
<keyword id="KW-0597">Phosphoprotein</keyword>
<keyword id="KW-1185">Reference proteome</keyword>
<keyword id="KW-0747">Spliceosome</keyword>
<keyword id="KW-0832">Ubl conjugation</keyword>
<accession>Q2KIA6</accession>
<feature type="chain" id="PRO_0000312362" description="U4/U6 small nuclear ribonucleoprotein Prp3">
    <location>
        <begin position="1"/>
        <end position="683"/>
    </location>
</feature>
<feature type="domain" description="PWI" evidence="2">
    <location>
        <begin position="1"/>
        <end position="87"/>
    </location>
</feature>
<feature type="region of interest" description="Disordered" evidence="3">
    <location>
        <begin position="73"/>
        <end position="135"/>
    </location>
</feature>
<feature type="region of interest" description="Disordered" evidence="3">
    <location>
        <begin position="153"/>
        <end position="183"/>
    </location>
</feature>
<feature type="region of interest" description="Mediates interaction with SART3" evidence="1">
    <location>
        <begin position="416"/>
        <end position="550"/>
    </location>
</feature>
<feature type="compositionally biased region" description="Basic and acidic residues" evidence="3">
    <location>
        <begin position="73"/>
        <end position="107"/>
    </location>
</feature>
<feature type="modified residue" description="Phosphoserine" evidence="1">
    <location>
        <position position="164"/>
    </location>
</feature>
<feature type="modified residue" description="Phosphothreonine" evidence="1">
    <location>
        <position position="167"/>
    </location>
</feature>
<feature type="modified residue" description="Phosphoserine" evidence="1">
    <location>
        <position position="619"/>
    </location>
</feature>
<feature type="cross-link" description="Glycyl lysine isopeptide (Lys-Gly) (interchain with G-Cter in SUMO2)" evidence="1">
    <location>
        <position position="139"/>
    </location>
</feature>
<feature type="cross-link" description="Glycyl lysine isopeptide (Lys-Gly) (interchain with G-Cter in SUMO2)" evidence="1">
    <location>
        <position position="244"/>
    </location>
</feature>
<feature type="cross-link" description="Glycyl lysine isopeptide (Lys-Gly) (interchain with G-Cter in SUMO2)" evidence="1">
    <location>
        <position position="252"/>
    </location>
</feature>
<gene>
    <name type="primary">PRPF3</name>
</gene>
<protein>
    <recommendedName>
        <fullName>U4/U6 small nuclear ribonucleoprotein Prp3</fullName>
    </recommendedName>
    <alternativeName>
        <fullName>Pre-mRNA-splicing factor 3</fullName>
    </alternativeName>
</protein>
<organism>
    <name type="scientific">Bos taurus</name>
    <name type="common">Bovine</name>
    <dbReference type="NCBI Taxonomy" id="9913"/>
    <lineage>
        <taxon>Eukaryota</taxon>
        <taxon>Metazoa</taxon>
        <taxon>Chordata</taxon>
        <taxon>Craniata</taxon>
        <taxon>Vertebrata</taxon>
        <taxon>Euteleostomi</taxon>
        <taxon>Mammalia</taxon>
        <taxon>Eutheria</taxon>
        <taxon>Laurasiatheria</taxon>
        <taxon>Artiodactyla</taxon>
        <taxon>Ruminantia</taxon>
        <taxon>Pecora</taxon>
        <taxon>Bovidae</taxon>
        <taxon>Bovinae</taxon>
        <taxon>Bos</taxon>
    </lineage>
</organism>